<name>BDBC2_BACC1</name>
<geneLocation type="plasmid">
    <name>pBc10987</name>
</geneLocation>
<evidence type="ECO:0000250" key="1"/>
<evidence type="ECO:0000255" key="2"/>
<evidence type="ECO:0000305" key="3"/>
<accession>P61777</accession>
<organism>
    <name type="scientific">Bacillus cereus (strain ATCC 10987 / NRS 248)</name>
    <dbReference type="NCBI Taxonomy" id="222523"/>
    <lineage>
        <taxon>Bacteria</taxon>
        <taxon>Bacillati</taxon>
        <taxon>Bacillota</taxon>
        <taxon>Bacilli</taxon>
        <taxon>Bacillales</taxon>
        <taxon>Bacillaceae</taxon>
        <taxon>Bacillus</taxon>
        <taxon>Bacillus cereus group</taxon>
    </lineage>
</organism>
<reference key="1">
    <citation type="journal article" date="2004" name="Nucleic Acids Res.">
        <title>The genome sequence of Bacillus cereus ATCC 10987 reveals metabolic adaptations and a large plasmid related to Bacillus anthracis pXO1.</title>
        <authorList>
            <person name="Rasko D.A."/>
            <person name="Ravel J."/>
            <person name="Oekstad O.A."/>
            <person name="Helgason E."/>
            <person name="Cer R.Z."/>
            <person name="Jiang L."/>
            <person name="Shores K.A."/>
            <person name="Fouts D.E."/>
            <person name="Tourasse N.J."/>
            <person name="Angiuoli S.V."/>
            <person name="Kolonay J.F."/>
            <person name="Nelson W.C."/>
            <person name="Kolstoe A.-B."/>
            <person name="Fraser C.M."/>
            <person name="Read T.D."/>
        </authorList>
    </citation>
    <scope>NUCLEOTIDE SEQUENCE [LARGE SCALE GENOMIC DNA]</scope>
    <source>
        <strain>ATCC 10987 / NRS 248</strain>
    </source>
</reference>
<dbReference type="EMBL" id="AE017195">
    <property type="protein sequence ID" value="AAS44994.1"/>
    <property type="molecule type" value="Genomic_DNA"/>
</dbReference>
<dbReference type="KEGG" id="bca:BCE_A0144"/>
<dbReference type="HOGENOM" id="CLU_128688_0_0_9"/>
<dbReference type="Proteomes" id="UP000002527">
    <property type="component" value="Plasmid pBc10987"/>
</dbReference>
<dbReference type="GO" id="GO:0005886">
    <property type="term" value="C:plasma membrane"/>
    <property type="evidence" value="ECO:0007669"/>
    <property type="project" value="UniProtKB-SubCell"/>
</dbReference>
<dbReference type="GO" id="GO:0015035">
    <property type="term" value="F:protein-disulfide reductase activity"/>
    <property type="evidence" value="ECO:0007669"/>
    <property type="project" value="UniProtKB-UniRule"/>
</dbReference>
<dbReference type="GO" id="GO:0006457">
    <property type="term" value="P:protein folding"/>
    <property type="evidence" value="ECO:0007669"/>
    <property type="project" value="InterPro"/>
</dbReference>
<dbReference type="Gene3D" id="1.20.1550.10">
    <property type="entry name" value="DsbB-like"/>
    <property type="match status" value="1"/>
</dbReference>
<dbReference type="HAMAP" id="MF_00287">
    <property type="entry name" value="BdbC"/>
    <property type="match status" value="1"/>
</dbReference>
<dbReference type="InterPro" id="IPR003752">
    <property type="entry name" value="DiS_bond_form_DsbB/BdbC"/>
</dbReference>
<dbReference type="InterPro" id="IPR012187">
    <property type="entry name" value="Disulphide_bond_form_BdbC"/>
</dbReference>
<dbReference type="InterPro" id="IPR023380">
    <property type="entry name" value="DsbB-like_sf"/>
</dbReference>
<dbReference type="NCBIfam" id="NF002849">
    <property type="entry name" value="PRK03113.1"/>
    <property type="match status" value="1"/>
</dbReference>
<dbReference type="PANTHER" id="PTHR43469">
    <property type="entry name" value="DISULFIDE FORMATION PROTEIN-RELATED"/>
    <property type="match status" value="1"/>
</dbReference>
<dbReference type="PANTHER" id="PTHR43469:SF1">
    <property type="entry name" value="SPBETA PROPHAGE-DERIVED DISULFIDE BOND FORMATION PROTEIN B"/>
    <property type="match status" value="1"/>
</dbReference>
<dbReference type="Pfam" id="PF02600">
    <property type="entry name" value="DsbB"/>
    <property type="match status" value="1"/>
</dbReference>
<dbReference type="PIRSF" id="PIRSF036659">
    <property type="entry name" value="BdbC"/>
    <property type="match status" value="1"/>
</dbReference>
<dbReference type="SUPFAM" id="SSF158442">
    <property type="entry name" value="DsbB-like"/>
    <property type="match status" value="1"/>
</dbReference>
<protein>
    <recommendedName>
        <fullName>Probable disulfide formation protein C 2</fullName>
    </recommendedName>
    <alternativeName>
        <fullName>Disulfide oxidoreductase C 2</fullName>
    </alternativeName>
    <alternativeName>
        <fullName>Thiol-disulfide oxidoreductase C 2</fullName>
    </alternativeName>
</protein>
<feature type="chain" id="PRO_0000059373" description="Probable disulfide formation protein C 2">
    <location>
        <begin position="1"/>
        <end position="139"/>
    </location>
</feature>
<feature type="transmembrane region" description="Helical" evidence="2">
    <location>
        <begin position="6"/>
        <end position="25"/>
    </location>
</feature>
<feature type="transmembrane region" description="Helical" evidence="2">
    <location>
        <begin position="40"/>
        <end position="59"/>
    </location>
</feature>
<feature type="transmembrane region" description="Helical" evidence="2">
    <location>
        <begin position="66"/>
        <end position="83"/>
    </location>
</feature>
<feature type="transmembrane region" description="Helical" evidence="2">
    <location>
        <begin position="110"/>
        <end position="133"/>
    </location>
</feature>
<feature type="disulfide bond" description="Redox-active" evidence="1">
    <location>
        <begin position="35"/>
        <end position="38"/>
    </location>
</feature>
<feature type="disulfide bond" description="Redox-active" evidence="1">
    <location>
        <begin position="95"/>
        <end position="101"/>
    </location>
</feature>
<comment type="function">
    <text evidence="1">Required for disulfide bond formation in some proteins.</text>
</comment>
<comment type="subcellular location">
    <subcellularLocation>
        <location evidence="3">Cell membrane</location>
        <topology evidence="3">Multi-pass membrane protein</topology>
    </subcellularLocation>
</comment>
<comment type="similarity">
    <text evidence="3">Belongs to the DsbB family. BdbC subfamily.</text>
</comment>
<sequence length="139" mass="16208">MEWIRKYHIAIAWMIATSAMLISLFFSEWMKLPPCDLCWYQRMAMYPLVLILGIGMYRKDPRVSMYAFPFTCIGLILSVYQITIQAFPINEMKICSVGVSCTEDYLNLFGFISIPMLSFIGFLVIIILIYIESDRETKE</sequence>
<gene>
    <name type="primary">bdbC2</name>
    <name type="ordered locus">BCE_A0144</name>
</gene>
<proteinExistence type="inferred from homology"/>
<keyword id="KW-1003">Cell membrane</keyword>
<keyword id="KW-0143">Chaperone</keyword>
<keyword id="KW-1015">Disulfide bond</keyword>
<keyword id="KW-0249">Electron transport</keyword>
<keyword id="KW-0472">Membrane</keyword>
<keyword id="KW-0560">Oxidoreductase</keyword>
<keyword id="KW-0614">Plasmid</keyword>
<keyword id="KW-0676">Redox-active center</keyword>
<keyword id="KW-0812">Transmembrane</keyword>
<keyword id="KW-1133">Transmembrane helix</keyword>
<keyword id="KW-0813">Transport</keyword>